<proteinExistence type="inferred from homology"/>
<feature type="chain" id="PRO_0000409432" description="Tethering factor for nuclear proteasome sts1">
    <location>
        <begin position="1"/>
        <end position="305"/>
    </location>
</feature>
<feature type="region of interest" description="Disordered" evidence="2">
    <location>
        <begin position="1"/>
        <end position="75"/>
    </location>
</feature>
<feature type="compositionally biased region" description="Polar residues" evidence="2">
    <location>
        <begin position="1"/>
        <end position="16"/>
    </location>
</feature>
<feature type="compositionally biased region" description="Basic residues" evidence="2">
    <location>
        <begin position="28"/>
        <end position="37"/>
    </location>
</feature>
<feature type="compositionally biased region" description="Polar residues" evidence="2">
    <location>
        <begin position="48"/>
        <end position="60"/>
    </location>
</feature>
<keyword id="KW-0963">Cytoplasm</keyword>
<keyword id="KW-0539">Nucleus</keyword>
<keyword id="KW-0653">Protein transport</keyword>
<keyword id="KW-1185">Reference proteome</keyword>
<keyword id="KW-0813">Transport</keyword>
<protein>
    <recommendedName>
        <fullName>Tethering factor for nuclear proteasome sts1</fullName>
    </recommendedName>
</protein>
<gene>
    <name type="primary">sts1</name>
    <name type="ORF">SS1G_10637</name>
</gene>
<organism>
    <name type="scientific">Sclerotinia sclerotiorum (strain ATCC 18683 / 1980 / Ss-1)</name>
    <name type="common">White mold</name>
    <name type="synonym">Whetzelinia sclerotiorum</name>
    <dbReference type="NCBI Taxonomy" id="665079"/>
    <lineage>
        <taxon>Eukaryota</taxon>
        <taxon>Fungi</taxon>
        <taxon>Dikarya</taxon>
        <taxon>Ascomycota</taxon>
        <taxon>Pezizomycotina</taxon>
        <taxon>Leotiomycetes</taxon>
        <taxon>Helotiales</taxon>
        <taxon>Sclerotiniaceae</taxon>
        <taxon>Sclerotinia</taxon>
    </lineage>
</organism>
<dbReference type="EMBL" id="CH476636">
    <property type="protein sequence ID" value="EDN94763.1"/>
    <property type="molecule type" value="Genomic_DNA"/>
</dbReference>
<dbReference type="RefSeq" id="XP_001588191.1">
    <property type="nucleotide sequence ID" value="XM_001588141.1"/>
</dbReference>
<dbReference type="SMR" id="A7EZ71"/>
<dbReference type="FunCoup" id="A7EZ71">
    <property type="interactions" value="9"/>
</dbReference>
<dbReference type="STRING" id="665079.A7EZ71"/>
<dbReference type="GeneID" id="5484251"/>
<dbReference type="KEGG" id="ssl:SS1G_10637"/>
<dbReference type="VEuPathDB" id="FungiDB:sscle_09g071060"/>
<dbReference type="InParanoid" id="A7EZ71"/>
<dbReference type="OMA" id="DYTPHFL"/>
<dbReference type="OrthoDB" id="10061064at2759"/>
<dbReference type="Proteomes" id="UP000001312">
    <property type="component" value="Unassembled WGS sequence"/>
</dbReference>
<dbReference type="GO" id="GO:0005737">
    <property type="term" value="C:cytoplasm"/>
    <property type="evidence" value="ECO:0007669"/>
    <property type="project" value="UniProtKB-SubCell"/>
</dbReference>
<dbReference type="GO" id="GO:0005634">
    <property type="term" value="C:nucleus"/>
    <property type="evidence" value="ECO:0007669"/>
    <property type="project" value="UniProtKB-SubCell"/>
</dbReference>
<dbReference type="GO" id="GO:0070628">
    <property type="term" value="F:proteasome binding"/>
    <property type="evidence" value="ECO:0000318"/>
    <property type="project" value="GO_Central"/>
</dbReference>
<dbReference type="GO" id="GO:0071630">
    <property type="term" value="P:nuclear protein quality control by the ubiquitin-proteasome system"/>
    <property type="evidence" value="ECO:0000318"/>
    <property type="project" value="GO_Central"/>
</dbReference>
<dbReference type="GO" id="GO:0031144">
    <property type="term" value="P:proteasome localization"/>
    <property type="evidence" value="ECO:0000318"/>
    <property type="project" value="GO_Central"/>
</dbReference>
<dbReference type="GO" id="GO:0015031">
    <property type="term" value="P:protein transport"/>
    <property type="evidence" value="ECO:0007669"/>
    <property type="project" value="UniProtKB-KW"/>
</dbReference>
<dbReference type="FunFam" id="1.20.58.1590:FF:000001">
    <property type="entry name" value="Tethering factor for nuclear proteasome STS1"/>
    <property type="match status" value="1"/>
</dbReference>
<dbReference type="Gene3D" id="1.20.58.1590">
    <property type="entry name" value="Tethering factor for nuclear proteasome Cut8/Sts1"/>
    <property type="match status" value="1"/>
</dbReference>
<dbReference type="InterPro" id="IPR013868">
    <property type="entry name" value="Cut8/Sts1_fam"/>
</dbReference>
<dbReference type="InterPro" id="IPR038422">
    <property type="entry name" value="Cut8/Sts1_sf"/>
</dbReference>
<dbReference type="PANTHER" id="PTHR28032">
    <property type="entry name" value="FI02826P"/>
    <property type="match status" value="1"/>
</dbReference>
<dbReference type="PANTHER" id="PTHR28032:SF1">
    <property type="entry name" value="FI02826P"/>
    <property type="match status" value="1"/>
</dbReference>
<dbReference type="Pfam" id="PF08559">
    <property type="entry name" value="Cut8"/>
    <property type="match status" value="1"/>
</dbReference>
<evidence type="ECO:0000250" key="1"/>
<evidence type="ECO:0000256" key="2">
    <source>
        <dbReference type="SAM" id="MobiDB-lite"/>
    </source>
</evidence>
<evidence type="ECO:0000305" key="3"/>
<name>STS1_SCLS1</name>
<reference key="1">
    <citation type="journal article" date="2011" name="PLoS Genet.">
        <title>Genomic analysis of the necrotrophic fungal pathogens Sclerotinia sclerotiorum and Botrytis cinerea.</title>
        <authorList>
            <person name="Amselem J."/>
            <person name="Cuomo C.A."/>
            <person name="van Kan J.A.L."/>
            <person name="Viaud M."/>
            <person name="Benito E.P."/>
            <person name="Couloux A."/>
            <person name="Coutinho P.M."/>
            <person name="de Vries R.P."/>
            <person name="Dyer P.S."/>
            <person name="Fillinger S."/>
            <person name="Fournier E."/>
            <person name="Gout L."/>
            <person name="Hahn M."/>
            <person name="Kohn L."/>
            <person name="Lapalu N."/>
            <person name="Plummer K.M."/>
            <person name="Pradier J.-M."/>
            <person name="Quevillon E."/>
            <person name="Sharon A."/>
            <person name="Simon A."/>
            <person name="ten Have A."/>
            <person name="Tudzynski B."/>
            <person name="Tudzynski P."/>
            <person name="Wincker P."/>
            <person name="Andrew M."/>
            <person name="Anthouard V."/>
            <person name="Beever R.E."/>
            <person name="Beffa R."/>
            <person name="Benoit I."/>
            <person name="Bouzid O."/>
            <person name="Brault B."/>
            <person name="Chen Z."/>
            <person name="Choquer M."/>
            <person name="Collemare J."/>
            <person name="Cotton P."/>
            <person name="Danchin E.G."/>
            <person name="Da Silva C."/>
            <person name="Gautier A."/>
            <person name="Giraud C."/>
            <person name="Giraud T."/>
            <person name="Gonzalez C."/>
            <person name="Grossetete S."/>
            <person name="Gueldener U."/>
            <person name="Henrissat B."/>
            <person name="Howlett B.J."/>
            <person name="Kodira C."/>
            <person name="Kretschmer M."/>
            <person name="Lappartient A."/>
            <person name="Leroch M."/>
            <person name="Levis C."/>
            <person name="Mauceli E."/>
            <person name="Neuveglise C."/>
            <person name="Oeser B."/>
            <person name="Pearson M."/>
            <person name="Poulain J."/>
            <person name="Poussereau N."/>
            <person name="Quesneville H."/>
            <person name="Rascle C."/>
            <person name="Schumacher J."/>
            <person name="Segurens B."/>
            <person name="Sexton A."/>
            <person name="Silva E."/>
            <person name="Sirven C."/>
            <person name="Soanes D.M."/>
            <person name="Talbot N.J."/>
            <person name="Templeton M."/>
            <person name="Yandava C."/>
            <person name="Yarden O."/>
            <person name="Zeng Q."/>
            <person name="Rollins J.A."/>
            <person name="Lebrun M.-H."/>
            <person name="Dickman M."/>
        </authorList>
    </citation>
    <scope>NUCLEOTIDE SEQUENCE [LARGE SCALE GENOMIC DNA]</scope>
    <source>
        <strain>ATCC 18683 / 1980 / Ss-1</strain>
    </source>
</reference>
<comment type="function">
    <text evidence="1">Involved in ubiquitin-mediated protein degradation. Regulatory factor in the ubiquitin/proteasome pathway that controls the turnover of proteasome substrates. Targets proteasomes to the nucleus and facilitates the degradation of nuclear proteins (By similarity).</text>
</comment>
<comment type="subunit">
    <text evidence="1">Binds the proteasome.</text>
</comment>
<comment type="subcellular location">
    <subcellularLocation>
        <location evidence="1">Cytoplasm</location>
    </subcellularLocation>
    <subcellularLocation>
        <location evidence="1">Nucleus</location>
    </subcellularLocation>
</comment>
<comment type="similarity">
    <text evidence="3">Belongs to the cut8/STS1 family.</text>
</comment>
<accession>A7EZ71</accession>
<sequence>MNVLLPTQASFFSSPHRNPIHTPVSPHTNHRMVGRKRKADDDGLDDNMSISPTNSPSLATRQIPRPSKKVRANEISGRPLSLPRLLETLDAQSLRSVLQTICERHPEIGSEIVTSAPRPSVASTLGVLSKYQNELQGAFPYGGSPGSDYAYDRVKQQLTNLIDALVDFTPHYLPPNEQQTAISLSFLDSATKIVHDLPNWDSQSHRHHKDNAYDEISRAWALVISEASKRGGGFQLHSGGWDQTLARHNEQSGGKMQMAVNALGSNLGWMGGNSGVGSGDPDSIRNQLLSGRYGTNQSVPVGAPW</sequence>